<organism>
    <name type="scientific">Arabidopsis thaliana</name>
    <name type="common">Mouse-ear cress</name>
    <dbReference type="NCBI Taxonomy" id="3702"/>
    <lineage>
        <taxon>Eukaryota</taxon>
        <taxon>Viridiplantae</taxon>
        <taxon>Streptophyta</taxon>
        <taxon>Embryophyta</taxon>
        <taxon>Tracheophyta</taxon>
        <taxon>Spermatophyta</taxon>
        <taxon>Magnoliopsida</taxon>
        <taxon>eudicotyledons</taxon>
        <taxon>Gunneridae</taxon>
        <taxon>Pentapetalae</taxon>
        <taxon>rosids</taxon>
        <taxon>malvids</taxon>
        <taxon>Brassicales</taxon>
        <taxon>Brassicaceae</taxon>
        <taxon>Camelineae</taxon>
        <taxon>Arabidopsis</taxon>
    </lineage>
</organism>
<comment type="function">
    <text>Non-catalytic component of the proteasome, a multicatalytic proteinase complex which is characterized by its ability to cleave peptides with Arg, Phe, Tyr, Leu, and Glu adjacent to the leaving group at neutral or slightly basic pH. The proteasome has an ATP-dependent proteolytic activity.</text>
</comment>
<comment type="subunit">
    <text evidence="3 4 5">Component of the 20S core complex of the 26S proteasome. The 26S proteasome is composed of a core protease (CP), known as the 20S proteasome, capped at one or both ends by the 19S regulatory particle (RP/PA700). The 20S proteasome core is composed of 28 subunits that are arranged in four stacked rings, resulting in a barrel-shaped structure. The two end rings are each formed by seven alpha subunits, and the two central rings are each formed by seven beta subunits. The catalytic chamber with the active sites is on the inside of the barrel.</text>
</comment>
<comment type="interaction">
    <interactant intactId="EBI-594372">
        <id>Q7DLR9</id>
    </interactant>
    <interactant intactId="EBI-4426557">
        <id>Q84MB2</id>
        <label>TIFY8</label>
    </interactant>
    <organismsDiffer>false</organismsDiffer>
    <experiments>3</experiments>
</comment>
<comment type="subcellular location">
    <subcellularLocation>
        <location evidence="2">Cytoplasm</location>
    </subcellularLocation>
    <subcellularLocation>
        <location evidence="1">Nucleus</location>
    </subcellularLocation>
</comment>
<comment type="tissue specificity">
    <text evidence="6">Ubiquitous low levels, higher expression in siliques and flowers.</text>
</comment>
<comment type="similarity">
    <text evidence="2">Belongs to the peptidase T1B family.</text>
</comment>
<name>PSB4_ARATH</name>
<keyword id="KW-0963">Cytoplasm</keyword>
<keyword id="KW-0539">Nucleus</keyword>
<keyword id="KW-0647">Proteasome</keyword>
<keyword id="KW-1185">Reference proteome</keyword>
<keyword id="KW-0865">Zymogen</keyword>
<gene>
    <name type="primary">PBG1</name>
    <name type="synonym">PRCH</name>
    <name type="ordered locus">At1g56450</name>
    <name type="ORF">F13N6.3</name>
</gene>
<sequence length="246" mass="27651">MTTFSVPIDNGDSMKIAEEESQRTLYPYVTGTSIVAIKYKDGVLMASDMGGSYGSTLRYKNIERVKAIGKHSLLGASGEISDFQEILRYLDELTLNDNMWDDGNSLGPKEIHNYLTRVMYNRRNKFNPLWNTLVLGGVKNGKSYLGMVSMIGVSFEDDHVATGFGNHLARPILRDEWHADLSFEDGVKLLEKCMRVLLYRDRSAINKLQIAKITEEGVTVSQPYSLKTYWEFSSFHNPTAGAAGSW</sequence>
<dbReference type="EMBL" id="AF043538">
    <property type="protein sequence ID" value="AAC32074.1"/>
    <property type="molecule type" value="mRNA"/>
</dbReference>
<dbReference type="EMBL" id="AC058785">
    <property type="protein sequence ID" value="AAG51500.1"/>
    <property type="molecule type" value="Genomic_DNA"/>
</dbReference>
<dbReference type="EMBL" id="CP002684">
    <property type="protein sequence ID" value="AEE33397.1"/>
    <property type="molecule type" value="Genomic_DNA"/>
</dbReference>
<dbReference type="EMBL" id="AF378880">
    <property type="protein sequence ID" value="AAK55683.1"/>
    <property type="molecule type" value="mRNA"/>
</dbReference>
<dbReference type="EMBL" id="AY045596">
    <property type="protein sequence ID" value="AAK73954.1"/>
    <property type="molecule type" value="mRNA"/>
</dbReference>
<dbReference type="EMBL" id="AY052739">
    <property type="protein sequence ID" value="AAK96453.1"/>
    <property type="molecule type" value="mRNA"/>
</dbReference>
<dbReference type="EMBL" id="AK221762">
    <property type="protein sequence ID" value="BAD93840.1"/>
    <property type="molecule type" value="mRNA"/>
</dbReference>
<dbReference type="EMBL" id="Y13696">
    <property type="protein sequence ID" value="CAA74030.1"/>
    <property type="molecule type" value="mRNA"/>
</dbReference>
<dbReference type="PIR" id="D96606">
    <property type="entry name" value="D96606"/>
</dbReference>
<dbReference type="PIR" id="T51986">
    <property type="entry name" value="T51986"/>
</dbReference>
<dbReference type="RefSeq" id="NP_176040.1">
    <property type="nucleotide sequence ID" value="NM_104523.4"/>
</dbReference>
<dbReference type="SMR" id="Q7DLR9"/>
<dbReference type="BioGRID" id="27323">
    <property type="interactions" value="77"/>
</dbReference>
<dbReference type="FunCoup" id="Q7DLR9">
    <property type="interactions" value="4843"/>
</dbReference>
<dbReference type="IntAct" id="Q7DLR9">
    <property type="interactions" value="2"/>
</dbReference>
<dbReference type="STRING" id="3702.Q7DLR9"/>
<dbReference type="MEROPS" id="T01.987"/>
<dbReference type="iPTMnet" id="Q7DLR9"/>
<dbReference type="PaxDb" id="3702-AT1G56450.1"/>
<dbReference type="ProteomicsDB" id="226225"/>
<dbReference type="EnsemblPlants" id="AT1G56450.1">
    <property type="protein sequence ID" value="AT1G56450.1"/>
    <property type="gene ID" value="AT1G56450"/>
</dbReference>
<dbReference type="GeneID" id="842098"/>
<dbReference type="Gramene" id="AT1G56450.1">
    <property type="protein sequence ID" value="AT1G56450.1"/>
    <property type="gene ID" value="AT1G56450"/>
</dbReference>
<dbReference type="KEGG" id="ath:AT1G56450"/>
<dbReference type="Araport" id="AT1G56450"/>
<dbReference type="TAIR" id="AT1G56450">
    <property type="gene designation" value="PBG1"/>
</dbReference>
<dbReference type="eggNOG" id="KOG0185">
    <property type="taxonomic scope" value="Eukaryota"/>
</dbReference>
<dbReference type="HOGENOM" id="CLU_072435_0_1_1"/>
<dbReference type="InParanoid" id="Q7DLR9"/>
<dbReference type="OMA" id="QPIMRRY"/>
<dbReference type="OrthoDB" id="1025352at2759"/>
<dbReference type="PhylomeDB" id="Q7DLR9"/>
<dbReference type="CD-CODE" id="4299E36E">
    <property type="entry name" value="Nucleolus"/>
</dbReference>
<dbReference type="PRO" id="PR:Q7DLR9"/>
<dbReference type="Proteomes" id="UP000006548">
    <property type="component" value="Chromosome 1"/>
</dbReference>
<dbReference type="ExpressionAtlas" id="Q7DLR9">
    <property type="expression patterns" value="baseline and differential"/>
</dbReference>
<dbReference type="GO" id="GO:0005829">
    <property type="term" value="C:cytosol"/>
    <property type="evidence" value="ECO:0007005"/>
    <property type="project" value="TAIR"/>
</dbReference>
<dbReference type="GO" id="GO:0022626">
    <property type="term" value="C:cytosolic ribosome"/>
    <property type="evidence" value="ECO:0007005"/>
    <property type="project" value="TAIR"/>
</dbReference>
<dbReference type="GO" id="GO:0005634">
    <property type="term" value="C:nucleus"/>
    <property type="evidence" value="ECO:0007005"/>
    <property type="project" value="TAIR"/>
</dbReference>
<dbReference type="GO" id="GO:0000502">
    <property type="term" value="C:proteasome complex"/>
    <property type="evidence" value="ECO:0000314"/>
    <property type="project" value="TAIR"/>
</dbReference>
<dbReference type="GO" id="GO:0019774">
    <property type="term" value="C:proteasome core complex, beta-subunit complex"/>
    <property type="evidence" value="ECO:0000250"/>
    <property type="project" value="UniProtKB"/>
</dbReference>
<dbReference type="GO" id="GO:0051603">
    <property type="term" value="P:proteolysis involved in protein catabolic process"/>
    <property type="evidence" value="ECO:0007669"/>
    <property type="project" value="InterPro"/>
</dbReference>
<dbReference type="CDD" id="cd03760">
    <property type="entry name" value="proteasome_beta_type_4"/>
    <property type="match status" value="1"/>
</dbReference>
<dbReference type="FunFam" id="3.60.20.10:FF:000014">
    <property type="entry name" value="Proteasome subunit beta type-7"/>
    <property type="match status" value="1"/>
</dbReference>
<dbReference type="Gene3D" id="3.60.20.10">
    <property type="entry name" value="Glutamine Phosphoribosylpyrophosphate, subunit 1, domain 1"/>
    <property type="match status" value="1"/>
</dbReference>
<dbReference type="InterPro" id="IPR029055">
    <property type="entry name" value="Ntn_hydrolases_N"/>
</dbReference>
<dbReference type="InterPro" id="IPR050115">
    <property type="entry name" value="Proteasome_alpha"/>
</dbReference>
<dbReference type="InterPro" id="IPR016295">
    <property type="entry name" value="Proteasome_beta4"/>
</dbReference>
<dbReference type="InterPro" id="IPR016050">
    <property type="entry name" value="Proteasome_bsu_CS"/>
</dbReference>
<dbReference type="InterPro" id="IPR001353">
    <property type="entry name" value="Proteasome_sua/b"/>
</dbReference>
<dbReference type="InterPro" id="IPR023333">
    <property type="entry name" value="Proteasome_suB-type"/>
</dbReference>
<dbReference type="PANTHER" id="PTHR11599">
    <property type="entry name" value="PROTEASOME SUBUNIT ALPHA/BETA"/>
    <property type="match status" value="1"/>
</dbReference>
<dbReference type="Pfam" id="PF00227">
    <property type="entry name" value="Proteasome"/>
    <property type="match status" value="1"/>
</dbReference>
<dbReference type="PIRSF" id="PIRSF001213">
    <property type="entry name" value="Psome_endopept_beta"/>
    <property type="match status" value="1"/>
</dbReference>
<dbReference type="SUPFAM" id="SSF56235">
    <property type="entry name" value="N-terminal nucleophile aminohydrolases (Ntn hydrolases)"/>
    <property type="match status" value="1"/>
</dbReference>
<dbReference type="PROSITE" id="PS00854">
    <property type="entry name" value="PROTEASOME_BETA_1"/>
    <property type="match status" value="1"/>
</dbReference>
<dbReference type="PROSITE" id="PS51476">
    <property type="entry name" value="PROTEASOME_BETA_2"/>
    <property type="match status" value="1"/>
</dbReference>
<proteinExistence type="evidence at protein level"/>
<protein>
    <recommendedName>
        <fullName>Proteasome subunit beta type-4</fullName>
    </recommendedName>
    <alternativeName>
        <fullName>20S proteasome beta subunit G-1</fullName>
    </alternativeName>
    <alternativeName>
        <fullName>Proteasome component H</fullName>
    </alternativeName>
    <alternativeName>
        <fullName>Proteasome subunit beta type-7</fullName>
    </alternativeName>
</protein>
<accession>Q7DLR9</accession>
<accession>O23718</accession>
<accession>Q9C7X3</accession>
<reference key="1">
    <citation type="journal article" date="1998" name="Genetics">
        <title>Molecular organization of the 20S proteasome gene family from Arabidopsis thaliana.</title>
        <authorList>
            <person name="Fu H."/>
            <person name="Doelling J.H."/>
            <person name="Arendt C.S."/>
            <person name="Hochstrasser M."/>
            <person name="Vierstra R.D."/>
        </authorList>
    </citation>
    <scope>NUCLEOTIDE SEQUENCE [MRNA]</scope>
    <scope>TISSUE SPECIFICITY</scope>
    <scope>GENE FAMILY</scope>
    <scope>NOMENCLATURE</scope>
    <source>
        <strain>cv. Columbia</strain>
    </source>
</reference>
<reference key="2">
    <citation type="journal article" date="2000" name="Nature">
        <title>Sequence and analysis of chromosome 1 of the plant Arabidopsis thaliana.</title>
        <authorList>
            <person name="Theologis A."/>
            <person name="Ecker J.R."/>
            <person name="Palm C.J."/>
            <person name="Federspiel N.A."/>
            <person name="Kaul S."/>
            <person name="White O."/>
            <person name="Alonso J."/>
            <person name="Altafi H."/>
            <person name="Araujo R."/>
            <person name="Bowman C.L."/>
            <person name="Brooks S.Y."/>
            <person name="Buehler E."/>
            <person name="Chan A."/>
            <person name="Chao Q."/>
            <person name="Chen H."/>
            <person name="Cheuk R.F."/>
            <person name="Chin C.W."/>
            <person name="Chung M.K."/>
            <person name="Conn L."/>
            <person name="Conway A.B."/>
            <person name="Conway A.R."/>
            <person name="Creasy T.H."/>
            <person name="Dewar K."/>
            <person name="Dunn P."/>
            <person name="Etgu P."/>
            <person name="Feldblyum T.V."/>
            <person name="Feng J.-D."/>
            <person name="Fong B."/>
            <person name="Fujii C.Y."/>
            <person name="Gill J.E."/>
            <person name="Goldsmith A.D."/>
            <person name="Haas B."/>
            <person name="Hansen N.F."/>
            <person name="Hughes B."/>
            <person name="Huizar L."/>
            <person name="Hunter J.L."/>
            <person name="Jenkins J."/>
            <person name="Johnson-Hopson C."/>
            <person name="Khan S."/>
            <person name="Khaykin E."/>
            <person name="Kim C.J."/>
            <person name="Koo H.L."/>
            <person name="Kremenetskaia I."/>
            <person name="Kurtz D.B."/>
            <person name="Kwan A."/>
            <person name="Lam B."/>
            <person name="Langin-Hooper S."/>
            <person name="Lee A."/>
            <person name="Lee J.M."/>
            <person name="Lenz C.A."/>
            <person name="Li J.H."/>
            <person name="Li Y.-P."/>
            <person name="Lin X."/>
            <person name="Liu S.X."/>
            <person name="Liu Z.A."/>
            <person name="Luros J.S."/>
            <person name="Maiti R."/>
            <person name="Marziali A."/>
            <person name="Militscher J."/>
            <person name="Miranda M."/>
            <person name="Nguyen M."/>
            <person name="Nierman W.C."/>
            <person name="Osborne B.I."/>
            <person name="Pai G."/>
            <person name="Peterson J."/>
            <person name="Pham P.K."/>
            <person name="Rizzo M."/>
            <person name="Rooney T."/>
            <person name="Rowley D."/>
            <person name="Sakano H."/>
            <person name="Salzberg S.L."/>
            <person name="Schwartz J.R."/>
            <person name="Shinn P."/>
            <person name="Southwick A.M."/>
            <person name="Sun H."/>
            <person name="Tallon L.J."/>
            <person name="Tambunga G."/>
            <person name="Toriumi M.J."/>
            <person name="Town C.D."/>
            <person name="Utterback T."/>
            <person name="Van Aken S."/>
            <person name="Vaysberg M."/>
            <person name="Vysotskaia V.S."/>
            <person name="Walker M."/>
            <person name="Wu D."/>
            <person name="Yu G."/>
            <person name="Fraser C.M."/>
            <person name="Venter J.C."/>
            <person name="Davis R.W."/>
        </authorList>
    </citation>
    <scope>NUCLEOTIDE SEQUENCE [LARGE SCALE GENOMIC DNA]</scope>
    <source>
        <strain>cv. Columbia</strain>
    </source>
</reference>
<reference key="3">
    <citation type="journal article" date="2017" name="Plant J.">
        <title>Araport11: a complete reannotation of the Arabidopsis thaliana reference genome.</title>
        <authorList>
            <person name="Cheng C.Y."/>
            <person name="Krishnakumar V."/>
            <person name="Chan A.P."/>
            <person name="Thibaud-Nissen F."/>
            <person name="Schobel S."/>
            <person name="Town C.D."/>
        </authorList>
    </citation>
    <scope>GENOME REANNOTATION</scope>
    <source>
        <strain>cv. Columbia</strain>
    </source>
</reference>
<reference key="4">
    <citation type="journal article" date="2003" name="Science">
        <title>Empirical analysis of transcriptional activity in the Arabidopsis genome.</title>
        <authorList>
            <person name="Yamada K."/>
            <person name="Lim J."/>
            <person name="Dale J.M."/>
            <person name="Chen H."/>
            <person name="Shinn P."/>
            <person name="Palm C.J."/>
            <person name="Southwick A.M."/>
            <person name="Wu H.C."/>
            <person name="Kim C.J."/>
            <person name="Nguyen M."/>
            <person name="Pham P.K."/>
            <person name="Cheuk R.F."/>
            <person name="Karlin-Newmann G."/>
            <person name="Liu S.X."/>
            <person name="Lam B."/>
            <person name="Sakano H."/>
            <person name="Wu T."/>
            <person name="Yu G."/>
            <person name="Miranda M."/>
            <person name="Quach H.L."/>
            <person name="Tripp M."/>
            <person name="Chang C.H."/>
            <person name="Lee J.M."/>
            <person name="Toriumi M.J."/>
            <person name="Chan M.M."/>
            <person name="Tang C.C."/>
            <person name="Onodera C.S."/>
            <person name="Deng J.M."/>
            <person name="Akiyama K."/>
            <person name="Ansari Y."/>
            <person name="Arakawa T."/>
            <person name="Banh J."/>
            <person name="Banno F."/>
            <person name="Bowser L."/>
            <person name="Brooks S.Y."/>
            <person name="Carninci P."/>
            <person name="Chao Q."/>
            <person name="Choy N."/>
            <person name="Enju A."/>
            <person name="Goldsmith A.D."/>
            <person name="Gurjal M."/>
            <person name="Hansen N.F."/>
            <person name="Hayashizaki Y."/>
            <person name="Johnson-Hopson C."/>
            <person name="Hsuan V.W."/>
            <person name="Iida K."/>
            <person name="Karnes M."/>
            <person name="Khan S."/>
            <person name="Koesema E."/>
            <person name="Ishida J."/>
            <person name="Jiang P.X."/>
            <person name="Jones T."/>
            <person name="Kawai J."/>
            <person name="Kamiya A."/>
            <person name="Meyers C."/>
            <person name="Nakajima M."/>
            <person name="Narusaka M."/>
            <person name="Seki M."/>
            <person name="Sakurai T."/>
            <person name="Satou M."/>
            <person name="Tamse R."/>
            <person name="Vaysberg M."/>
            <person name="Wallender E.K."/>
            <person name="Wong C."/>
            <person name="Yamamura Y."/>
            <person name="Yuan S."/>
            <person name="Shinozaki K."/>
            <person name="Davis R.W."/>
            <person name="Theologis A."/>
            <person name="Ecker J.R."/>
        </authorList>
    </citation>
    <scope>NUCLEOTIDE SEQUENCE [LARGE SCALE MRNA]</scope>
    <source>
        <strain>cv. Columbia</strain>
    </source>
</reference>
<reference key="5">
    <citation type="submission" date="2005-03" db="EMBL/GenBank/DDBJ databases">
        <title>Large-scale analysis of RIKEN Arabidopsis full-length (RAFL) cDNAs.</title>
        <authorList>
            <person name="Totoki Y."/>
            <person name="Seki M."/>
            <person name="Ishida J."/>
            <person name="Nakajima M."/>
            <person name="Enju A."/>
            <person name="Kamiya A."/>
            <person name="Narusaka M."/>
            <person name="Shin-i T."/>
            <person name="Nakagawa M."/>
            <person name="Sakamoto N."/>
            <person name="Oishi K."/>
            <person name="Kohara Y."/>
            <person name="Kobayashi M."/>
            <person name="Toyoda A."/>
            <person name="Sakaki Y."/>
            <person name="Sakurai T."/>
            <person name="Iida K."/>
            <person name="Akiyama K."/>
            <person name="Satou M."/>
            <person name="Toyoda T."/>
            <person name="Konagaya A."/>
            <person name="Carninci P."/>
            <person name="Kawai J."/>
            <person name="Hayashizaki Y."/>
            <person name="Shinozaki K."/>
        </authorList>
    </citation>
    <scope>NUCLEOTIDE SEQUENCE [LARGE SCALE MRNA]</scope>
    <source>
        <strain>cv. Columbia</strain>
    </source>
</reference>
<reference key="6">
    <citation type="journal article" date="1997" name="FEBS Lett.">
        <title>The 20S proteasome gene family in Arabidopsis thaliana.</title>
        <authorList>
            <person name="Parmentier Y."/>
            <person name="Bouchez D."/>
            <person name="Fleck J."/>
            <person name="Genschik P."/>
        </authorList>
    </citation>
    <scope>NUCLEOTIDE SEQUENCE [MRNA] OF 126-246</scope>
    <source>
        <strain>cv. Columbia</strain>
    </source>
</reference>
<reference key="7">
    <citation type="journal article" date="1999" name="Mol. Biol. Rep.">
        <title>Structure and functional analyses of the 26S proteasome subunits from plants.</title>
        <authorList>
            <person name="Fu H."/>
            <person name="Girod P.-A."/>
            <person name="Doelling J.H."/>
            <person name="van Nocker S."/>
            <person name="Hochstrasser M."/>
            <person name="Finley D."/>
            <person name="Vierstra R.D."/>
        </authorList>
    </citation>
    <scope>SUBUNIT</scope>
</reference>
<reference key="8">
    <citation type="journal article" date="2004" name="J. Biol. Chem.">
        <title>Purification of the Arabidopsis 26 S proteasome: biochemical and molecular analyses revealed the presence of multiple isoforms.</title>
        <authorList>
            <person name="Yang P."/>
            <person name="Fu H."/>
            <person name="Walker J."/>
            <person name="Papa C.M."/>
            <person name="Smalle J."/>
            <person name="Ju Y.-M."/>
            <person name="Vierstra R.D."/>
        </authorList>
    </citation>
    <scope>SUBUNIT</scope>
    <scope>IDENTIFICATION BY MASS SPECTROMETRY</scope>
</reference>
<reference key="9">
    <citation type="journal article" date="2010" name="J. Biol. Chem.">
        <title>Affinity purification of the Arabidopsis 26 S proteasome reveals a diverse array of plant proteolytic complexes.</title>
        <authorList>
            <person name="Book A.J."/>
            <person name="Gladman N.P."/>
            <person name="Lee S.S."/>
            <person name="Scalf M."/>
            <person name="Smith L.M."/>
            <person name="Vierstra R.D."/>
        </authorList>
    </citation>
    <scope>IDENTIFICATION BY MASS SPECTROMETRY</scope>
    <scope>CHARACTERIZATION OF THE 26S PROTEASOME COMPLEX</scope>
    <scope>SUBUNIT</scope>
</reference>
<feature type="propeptide" id="PRO_0000042824" evidence="1">
    <location>
        <begin position="1"/>
        <end position="23"/>
    </location>
</feature>
<feature type="chain" id="PRO_0000042825" description="Proteasome subunit beta type-4">
    <location>
        <begin position="24"/>
        <end position="246"/>
    </location>
</feature>
<feature type="active site" description="Nucleophile" evidence="1">
    <location>
        <position position="24"/>
    </location>
</feature>
<feature type="sequence conflict" description="In Ref. 1; AAC32074." evidence="7" ref="1">
    <original>I</original>
    <variation>V</variation>
    <location>
        <position position="34"/>
    </location>
</feature>
<evidence type="ECO:0000250" key="1"/>
<evidence type="ECO:0000255" key="2">
    <source>
        <dbReference type="PROSITE-ProRule" id="PRU00809"/>
    </source>
</evidence>
<evidence type="ECO:0000269" key="3">
    <source>
    </source>
</evidence>
<evidence type="ECO:0000269" key="4">
    <source>
    </source>
</evidence>
<evidence type="ECO:0000269" key="5">
    <source>
    </source>
</evidence>
<evidence type="ECO:0000269" key="6">
    <source>
    </source>
</evidence>
<evidence type="ECO:0000305" key="7"/>